<name>HIS7_DEIDV</name>
<organism>
    <name type="scientific">Deinococcus deserti (strain DSM 17065 / CIP 109153 / LMG 22923 / VCD115)</name>
    <dbReference type="NCBI Taxonomy" id="546414"/>
    <lineage>
        <taxon>Bacteria</taxon>
        <taxon>Thermotogati</taxon>
        <taxon>Deinococcota</taxon>
        <taxon>Deinococci</taxon>
        <taxon>Deinococcales</taxon>
        <taxon>Deinococcaceae</taxon>
        <taxon>Deinococcus</taxon>
    </lineage>
</organism>
<accession>C1D1S1</accession>
<proteinExistence type="inferred from homology"/>
<feature type="chain" id="PRO_1000202509" description="Imidazoleglycerol-phosphate dehydratase">
    <location>
        <begin position="1"/>
        <end position="195"/>
    </location>
</feature>
<keyword id="KW-0028">Amino-acid biosynthesis</keyword>
<keyword id="KW-0963">Cytoplasm</keyword>
<keyword id="KW-0368">Histidine biosynthesis</keyword>
<keyword id="KW-0456">Lyase</keyword>
<keyword id="KW-1185">Reference proteome</keyword>
<sequence>MSRLATVQRTTTETDIEIRLNLDQPEFEAPATGHGFLDHMLDALARHSRLGLSVRASGDLHIEPHHLIEDAGITLGQALTQALGDRRGIERYGSAFVPMDETLAHVVVDLSGRAHLAFEPETLDVWGQAGGMTHYHLREFLRGLCNHGGVTMHVRLLAGREAHHVIEAIVKALARALRDAVALTSDQLPSTKGSL</sequence>
<protein>
    <recommendedName>
        <fullName evidence="1">Imidazoleglycerol-phosphate dehydratase</fullName>
        <shortName evidence="1">IGPD</shortName>
        <ecNumber evidence="1">4.2.1.19</ecNumber>
    </recommendedName>
</protein>
<evidence type="ECO:0000255" key="1">
    <source>
        <dbReference type="HAMAP-Rule" id="MF_00076"/>
    </source>
</evidence>
<comment type="catalytic activity">
    <reaction evidence="1">
        <text>D-erythro-1-(imidazol-4-yl)glycerol 3-phosphate = 3-(imidazol-4-yl)-2-oxopropyl phosphate + H2O</text>
        <dbReference type="Rhea" id="RHEA:11040"/>
        <dbReference type="ChEBI" id="CHEBI:15377"/>
        <dbReference type="ChEBI" id="CHEBI:57766"/>
        <dbReference type="ChEBI" id="CHEBI:58278"/>
        <dbReference type="EC" id="4.2.1.19"/>
    </reaction>
</comment>
<comment type="pathway">
    <text evidence="1">Amino-acid biosynthesis; L-histidine biosynthesis; L-histidine from 5-phospho-alpha-D-ribose 1-diphosphate: step 6/9.</text>
</comment>
<comment type="subcellular location">
    <subcellularLocation>
        <location evidence="1">Cytoplasm</location>
    </subcellularLocation>
</comment>
<comment type="similarity">
    <text evidence="1">Belongs to the imidazoleglycerol-phosphate dehydratase family.</text>
</comment>
<gene>
    <name evidence="1" type="primary">hisB</name>
    <name type="ordered locus">Deide_09180</name>
</gene>
<dbReference type="EC" id="4.2.1.19" evidence="1"/>
<dbReference type="EMBL" id="CP001114">
    <property type="protein sequence ID" value="ACO45795.1"/>
    <property type="molecule type" value="Genomic_DNA"/>
</dbReference>
<dbReference type="RefSeq" id="WP_012692918.1">
    <property type="nucleotide sequence ID" value="NC_012526.1"/>
</dbReference>
<dbReference type="SMR" id="C1D1S1"/>
<dbReference type="STRING" id="546414.Deide_09180"/>
<dbReference type="PaxDb" id="546414-Deide_09180"/>
<dbReference type="KEGG" id="ddr:Deide_09180"/>
<dbReference type="eggNOG" id="COG0131">
    <property type="taxonomic scope" value="Bacteria"/>
</dbReference>
<dbReference type="HOGENOM" id="CLU_044308_3_0_0"/>
<dbReference type="OrthoDB" id="9790411at2"/>
<dbReference type="UniPathway" id="UPA00031">
    <property type="reaction ID" value="UER00011"/>
</dbReference>
<dbReference type="Proteomes" id="UP000002208">
    <property type="component" value="Chromosome"/>
</dbReference>
<dbReference type="GO" id="GO:0005737">
    <property type="term" value="C:cytoplasm"/>
    <property type="evidence" value="ECO:0007669"/>
    <property type="project" value="UniProtKB-SubCell"/>
</dbReference>
<dbReference type="GO" id="GO:0004424">
    <property type="term" value="F:imidazoleglycerol-phosphate dehydratase activity"/>
    <property type="evidence" value="ECO:0007669"/>
    <property type="project" value="UniProtKB-UniRule"/>
</dbReference>
<dbReference type="GO" id="GO:0000105">
    <property type="term" value="P:L-histidine biosynthetic process"/>
    <property type="evidence" value="ECO:0007669"/>
    <property type="project" value="UniProtKB-UniRule"/>
</dbReference>
<dbReference type="CDD" id="cd07914">
    <property type="entry name" value="IGPD"/>
    <property type="match status" value="1"/>
</dbReference>
<dbReference type="FunFam" id="3.30.230.40:FF:000001">
    <property type="entry name" value="Imidazoleglycerol-phosphate dehydratase HisB"/>
    <property type="match status" value="1"/>
</dbReference>
<dbReference type="FunFam" id="3.30.230.40:FF:000003">
    <property type="entry name" value="Imidazoleglycerol-phosphate dehydratase HisB"/>
    <property type="match status" value="1"/>
</dbReference>
<dbReference type="Gene3D" id="3.30.230.40">
    <property type="entry name" value="Imidazole glycerol phosphate dehydratase, domain 1"/>
    <property type="match status" value="2"/>
</dbReference>
<dbReference type="HAMAP" id="MF_00076">
    <property type="entry name" value="HisB"/>
    <property type="match status" value="1"/>
</dbReference>
<dbReference type="InterPro" id="IPR038494">
    <property type="entry name" value="IGPD_sf"/>
</dbReference>
<dbReference type="InterPro" id="IPR000807">
    <property type="entry name" value="ImidazoleglycerolP_deHydtase"/>
</dbReference>
<dbReference type="InterPro" id="IPR020565">
    <property type="entry name" value="ImidazoleglycerP_deHydtase_CS"/>
</dbReference>
<dbReference type="InterPro" id="IPR020568">
    <property type="entry name" value="Ribosomal_Su5_D2-typ_SF"/>
</dbReference>
<dbReference type="NCBIfam" id="NF002114">
    <property type="entry name" value="PRK00951.2-4"/>
    <property type="match status" value="1"/>
</dbReference>
<dbReference type="PANTHER" id="PTHR23133:SF2">
    <property type="entry name" value="IMIDAZOLEGLYCEROL-PHOSPHATE DEHYDRATASE"/>
    <property type="match status" value="1"/>
</dbReference>
<dbReference type="PANTHER" id="PTHR23133">
    <property type="entry name" value="IMIDAZOLEGLYCEROL-PHOSPHATE DEHYDRATASE HIS7"/>
    <property type="match status" value="1"/>
</dbReference>
<dbReference type="Pfam" id="PF00475">
    <property type="entry name" value="IGPD"/>
    <property type="match status" value="1"/>
</dbReference>
<dbReference type="SUPFAM" id="SSF54211">
    <property type="entry name" value="Ribosomal protein S5 domain 2-like"/>
    <property type="match status" value="2"/>
</dbReference>
<dbReference type="PROSITE" id="PS00954">
    <property type="entry name" value="IGP_DEHYDRATASE_1"/>
    <property type="match status" value="1"/>
</dbReference>
<dbReference type="PROSITE" id="PS00955">
    <property type="entry name" value="IGP_DEHYDRATASE_2"/>
    <property type="match status" value="1"/>
</dbReference>
<reference key="1">
    <citation type="journal article" date="2009" name="PLoS Genet.">
        <title>Alliance of proteomics and genomics to unravel the specificities of Sahara bacterium Deinococcus deserti.</title>
        <authorList>
            <person name="de Groot A."/>
            <person name="Dulermo R."/>
            <person name="Ortet P."/>
            <person name="Blanchard L."/>
            <person name="Guerin P."/>
            <person name="Fernandez B."/>
            <person name="Vacherie B."/>
            <person name="Dossat C."/>
            <person name="Jolivet E."/>
            <person name="Siguier P."/>
            <person name="Chandler M."/>
            <person name="Barakat M."/>
            <person name="Dedieu A."/>
            <person name="Barbe V."/>
            <person name="Heulin T."/>
            <person name="Sommer S."/>
            <person name="Achouak W."/>
            <person name="Armengaud J."/>
        </authorList>
    </citation>
    <scope>NUCLEOTIDE SEQUENCE [LARGE SCALE GENOMIC DNA]</scope>
    <source>
        <strain>DSM 17065 / CIP 109153 / LMG 22923 / VCD115</strain>
    </source>
</reference>